<comment type="function">
    <text evidence="1">Catalyzes the hydrolysis of nucleoside triphosphates, with a preference for pyrimidine deoxynucleoside triphosphates (dUTP, dTTP and dCTP).</text>
</comment>
<comment type="catalytic activity">
    <reaction evidence="1">
        <text>a ribonucleoside 5'-triphosphate + H2O = a ribonucleoside 5'-phosphate + diphosphate + H(+)</text>
        <dbReference type="Rhea" id="RHEA:23996"/>
        <dbReference type="ChEBI" id="CHEBI:15377"/>
        <dbReference type="ChEBI" id="CHEBI:15378"/>
        <dbReference type="ChEBI" id="CHEBI:33019"/>
        <dbReference type="ChEBI" id="CHEBI:58043"/>
        <dbReference type="ChEBI" id="CHEBI:61557"/>
        <dbReference type="EC" id="3.6.1.9"/>
    </reaction>
</comment>
<comment type="catalytic activity">
    <reaction evidence="1">
        <text>a 2'-deoxyribonucleoside 5'-triphosphate + H2O = a 2'-deoxyribonucleoside 5'-phosphate + diphosphate + H(+)</text>
        <dbReference type="Rhea" id="RHEA:44644"/>
        <dbReference type="ChEBI" id="CHEBI:15377"/>
        <dbReference type="ChEBI" id="CHEBI:15378"/>
        <dbReference type="ChEBI" id="CHEBI:33019"/>
        <dbReference type="ChEBI" id="CHEBI:61560"/>
        <dbReference type="ChEBI" id="CHEBI:65317"/>
        <dbReference type="EC" id="3.6.1.9"/>
    </reaction>
</comment>
<comment type="catalytic activity">
    <reaction evidence="1">
        <text>dUTP + H2O = dUMP + diphosphate + H(+)</text>
        <dbReference type="Rhea" id="RHEA:10248"/>
        <dbReference type="ChEBI" id="CHEBI:15377"/>
        <dbReference type="ChEBI" id="CHEBI:15378"/>
        <dbReference type="ChEBI" id="CHEBI:33019"/>
        <dbReference type="ChEBI" id="CHEBI:61555"/>
        <dbReference type="ChEBI" id="CHEBI:246422"/>
        <dbReference type="EC" id="3.6.1.9"/>
    </reaction>
</comment>
<comment type="catalytic activity">
    <reaction evidence="1">
        <text>dUTP + H2O = dUMP + diphosphate + H(+)</text>
        <dbReference type="Rhea" id="RHEA:10248"/>
        <dbReference type="ChEBI" id="CHEBI:15377"/>
        <dbReference type="ChEBI" id="CHEBI:15378"/>
        <dbReference type="ChEBI" id="CHEBI:33019"/>
        <dbReference type="ChEBI" id="CHEBI:61555"/>
        <dbReference type="ChEBI" id="CHEBI:246422"/>
        <dbReference type="EC" id="3.6.1.23"/>
    </reaction>
</comment>
<comment type="catalytic activity">
    <reaction evidence="1">
        <text>dTTP + H2O = dTMP + diphosphate + H(+)</text>
        <dbReference type="Rhea" id="RHEA:28534"/>
        <dbReference type="ChEBI" id="CHEBI:15377"/>
        <dbReference type="ChEBI" id="CHEBI:15378"/>
        <dbReference type="ChEBI" id="CHEBI:33019"/>
        <dbReference type="ChEBI" id="CHEBI:37568"/>
        <dbReference type="ChEBI" id="CHEBI:63528"/>
        <dbReference type="EC" id="3.6.1.9"/>
    </reaction>
</comment>
<comment type="catalytic activity">
    <reaction evidence="1">
        <text>dCTP + H2O = dCMP + diphosphate + H(+)</text>
        <dbReference type="Rhea" id="RHEA:22636"/>
        <dbReference type="ChEBI" id="CHEBI:15377"/>
        <dbReference type="ChEBI" id="CHEBI:15378"/>
        <dbReference type="ChEBI" id="CHEBI:33019"/>
        <dbReference type="ChEBI" id="CHEBI:57566"/>
        <dbReference type="ChEBI" id="CHEBI:61481"/>
        <dbReference type="EC" id="3.6.1.9"/>
    </reaction>
</comment>
<comment type="catalytic activity">
    <reaction evidence="1">
        <text>dCTP + H2O = dCMP + diphosphate + H(+)</text>
        <dbReference type="Rhea" id="RHEA:22636"/>
        <dbReference type="ChEBI" id="CHEBI:15377"/>
        <dbReference type="ChEBI" id="CHEBI:15378"/>
        <dbReference type="ChEBI" id="CHEBI:33019"/>
        <dbReference type="ChEBI" id="CHEBI:57566"/>
        <dbReference type="ChEBI" id="CHEBI:61481"/>
        <dbReference type="EC" id="3.6.1.12"/>
    </reaction>
</comment>
<comment type="cofactor">
    <cofactor evidence="1">
        <name>Mg(2+)</name>
        <dbReference type="ChEBI" id="CHEBI:18420"/>
    </cofactor>
</comment>
<comment type="subunit">
    <text evidence="1">Monomer.</text>
</comment>
<comment type="similarity">
    <text evidence="1">Belongs to the Nudix hydrolase family. NudI subfamily.</text>
</comment>
<gene>
    <name evidence="1" type="primary">nudI</name>
    <name type="ordered locus">EC55989_2497</name>
</gene>
<accession>B7LAR6</accession>
<keyword id="KW-0378">Hydrolase</keyword>
<keyword id="KW-0460">Magnesium</keyword>
<keyword id="KW-1185">Reference proteome</keyword>
<evidence type="ECO:0000255" key="1">
    <source>
        <dbReference type="HAMAP-Rule" id="MF_01846"/>
    </source>
</evidence>
<proteinExistence type="inferred from homology"/>
<organism>
    <name type="scientific">Escherichia coli (strain 55989 / EAEC)</name>
    <dbReference type="NCBI Taxonomy" id="585055"/>
    <lineage>
        <taxon>Bacteria</taxon>
        <taxon>Pseudomonadati</taxon>
        <taxon>Pseudomonadota</taxon>
        <taxon>Gammaproteobacteria</taxon>
        <taxon>Enterobacterales</taxon>
        <taxon>Enterobacteriaceae</taxon>
        <taxon>Escherichia</taxon>
    </lineage>
</organism>
<sequence>MRQRTIVCPLIQNDGAYLLCKMADDRGVFPGQWALSGGGVESGERIEEALRREIREELGEQLLLTEITPWTFSDDIRTKTYADGRKEEIYMIYLIFDCVSANREVKINEEFQDYAWVKPEDLVHYDLNVATRKTLRLKGLL</sequence>
<reference key="1">
    <citation type="journal article" date="2009" name="PLoS Genet.">
        <title>Organised genome dynamics in the Escherichia coli species results in highly diverse adaptive paths.</title>
        <authorList>
            <person name="Touchon M."/>
            <person name="Hoede C."/>
            <person name="Tenaillon O."/>
            <person name="Barbe V."/>
            <person name="Baeriswyl S."/>
            <person name="Bidet P."/>
            <person name="Bingen E."/>
            <person name="Bonacorsi S."/>
            <person name="Bouchier C."/>
            <person name="Bouvet O."/>
            <person name="Calteau A."/>
            <person name="Chiapello H."/>
            <person name="Clermont O."/>
            <person name="Cruveiller S."/>
            <person name="Danchin A."/>
            <person name="Diard M."/>
            <person name="Dossat C."/>
            <person name="Karoui M.E."/>
            <person name="Frapy E."/>
            <person name="Garry L."/>
            <person name="Ghigo J.M."/>
            <person name="Gilles A.M."/>
            <person name="Johnson J."/>
            <person name="Le Bouguenec C."/>
            <person name="Lescat M."/>
            <person name="Mangenot S."/>
            <person name="Martinez-Jehanne V."/>
            <person name="Matic I."/>
            <person name="Nassif X."/>
            <person name="Oztas S."/>
            <person name="Petit M.A."/>
            <person name="Pichon C."/>
            <person name="Rouy Z."/>
            <person name="Ruf C.S."/>
            <person name="Schneider D."/>
            <person name="Tourret J."/>
            <person name="Vacherie B."/>
            <person name="Vallenet D."/>
            <person name="Medigue C."/>
            <person name="Rocha E.P.C."/>
            <person name="Denamur E."/>
        </authorList>
    </citation>
    <scope>NUCLEOTIDE SEQUENCE [LARGE SCALE GENOMIC DNA]</scope>
    <source>
        <strain>55989 / EAEC</strain>
    </source>
</reference>
<protein>
    <recommendedName>
        <fullName evidence="1">Nucleoside triphosphatase NudI</fullName>
        <ecNumber evidence="1">3.6.1.9</ecNumber>
    </recommendedName>
    <alternativeName>
        <fullName evidence="1">Nucleotide diphosphatase NudI</fullName>
    </alternativeName>
    <alternativeName>
        <fullName evidence="1">Pyrimidine deoxynucleoside triphosphate diphosphatase</fullName>
    </alternativeName>
    <alternativeName>
        <fullName evidence="1">dCTP diphosphatase</fullName>
        <ecNumber evidence="1">3.6.1.12</ecNumber>
    </alternativeName>
    <alternativeName>
        <fullName evidence="1">dTTP diphosphatase</fullName>
        <ecNumber evidence="1">3.6.1.-</ecNumber>
    </alternativeName>
    <alternativeName>
        <fullName evidence="1">dUTP diphosphatase</fullName>
        <ecNumber evidence="1">3.6.1.23</ecNumber>
    </alternativeName>
</protein>
<name>NUDI_ECO55</name>
<dbReference type="EC" id="3.6.1.9" evidence="1"/>
<dbReference type="EC" id="3.6.1.12" evidence="1"/>
<dbReference type="EC" id="3.6.1.-" evidence="1"/>
<dbReference type="EC" id="3.6.1.23" evidence="1"/>
<dbReference type="EMBL" id="CU928145">
    <property type="protein sequence ID" value="CAU98366.1"/>
    <property type="molecule type" value="Genomic_DNA"/>
</dbReference>
<dbReference type="RefSeq" id="WP_001249889.1">
    <property type="nucleotide sequence ID" value="NC_011748.1"/>
</dbReference>
<dbReference type="SMR" id="B7LAR6"/>
<dbReference type="GeneID" id="93774923"/>
<dbReference type="KEGG" id="eck:EC55989_2497"/>
<dbReference type="HOGENOM" id="CLU_037162_31_0_6"/>
<dbReference type="Proteomes" id="UP000000746">
    <property type="component" value="Chromosome"/>
</dbReference>
<dbReference type="GO" id="GO:0047840">
    <property type="term" value="F:dCTP diphosphatase activity"/>
    <property type="evidence" value="ECO:0007669"/>
    <property type="project" value="UniProtKB-EC"/>
</dbReference>
<dbReference type="GO" id="GO:0036218">
    <property type="term" value="F:dTTP diphosphatase activity"/>
    <property type="evidence" value="ECO:0007669"/>
    <property type="project" value="RHEA"/>
</dbReference>
<dbReference type="GO" id="GO:0004170">
    <property type="term" value="F:dUTP diphosphatase activity"/>
    <property type="evidence" value="ECO:0007669"/>
    <property type="project" value="UniProtKB-EC"/>
</dbReference>
<dbReference type="GO" id="GO:0000287">
    <property type="term" value="F:magnesium ion binding"/>
    <property type="evidence" value="ECO:0007669"/>
    <property type="project" value="UniProtKB-UniRule"/>
</dbReference>
<dbReference type="FunFam" id="3.90.79.10:FF:000039">
    <property type="entry name" value="Nucleoside triphosphatase NudI"/>
    <property type="match status" value="1"/>
</dbReference>
<dbReference type="Gene3D" id="3.90.79.10">
    <property type="entry name" value="Nucleoside Triphosphate Pyrophosphohydrolase"/>
    <property type="match status" value="1"/>
</dbReference>
<dbReference type="HAMAP" id="MF_01846">
    <property type="entry name" value="Nudix_NudI"/>
    <property type="match status" value="1"/>
</dbReference>
<dbReference type="InterPro" id="IPR023781">
    <property type="entry name" value="Nucleoside_triphosphatase_NudI"/>
</dbReference>
<dbReference type="InterPro" id="IPR020476">
    <property type="entry name" value="Nudix_hydrolase"/>
</dbReference>
<dbReference type="InterPro" id="IPR015797">
    <property type="entry name" value="NUDIX_hydrolase-like_dom_sf"/>
</dbReference>
<dbReference type="InterPro" id="IPR020084">
    <property type="entry name" value="NUDIX_hydrolase_CS"/>
</dbReference>
<dbReference type="InterPro" id="IPR000086">
    <property type="entry name" value="NUDIX_hydrolase_dom"/>
</dbReference>
<dbReference type="NCBIfam" id="NF012016">
    <property type="entry name" value="PRK15472.1"/>
    <property type="match status" value="1"/>
</dbReference>
<dbReference type="PANTHER" id="PTHR43046">
    <property type="entry name" value="GDP-MANNOSE MANNOSYL HYDROLASE"/>
    <property type="match status" value="1"/>
</dbReference>
<dbReference type="PANTHER" id="PTHR43046:SF14">
    <property type="entry name" value="MUTT_NUDIX FAMILY PROTEIN"/>
    <property type="match status" value="1"/>
</dbReference>
<dbReference type="Pfam" id="PF00293">
    <property type="entry name" value="NUDIX"/>
    <property type="match status" value="1"/>
</dbReference>
<dbReference type="PRINTS" id="PR00502">
    <property type="entry name" value="NUDIXFAMILY"/>
</dbReference>
<dbReference type="SUPFAM" id="SSF55811">
    <property type="entry name" value="Nudix"/>
    <property type="match status" value="1"/>
</dbReference>
<dbReference type="PROSITE" id="PS51462">
    <property type="entry name" value="NUDIX"/>
    <property type="match status" value="1"/>
</dbReference>
<dbReference type="PROSITE" id="PS00893">
    <property type="entry name" value="NUDIX_BOX"/>
    <property type="match status" value="1"/>
</dbReference>
<feature type="chain" id="PRO_1000188478" description="Nucleoside triphosphatase NudI">
    <location>
        <begin position="1"/>
        <end position="141"/>
    </location>
</feature>
<feature type="domain" description="Nudix hydrolase" evidence="1">
    <location>
        <begin position="1"/>
        <end position="141"/>
    </location>
</feature>
<feature type="short sequence motif" description="Nudix box">
    <location>
        <begin position="38"/>
        <end position="59"/>
    </location>
</feature>